<organism>
    <name type="scientific">Arthroderma benhamiae (strain ATCC MYA-4681 / CBS 112371)</name>
    <name type="common">Trichophyton mentagrophytes</name>
    <dbReference type="NCBI Taxonomy" id="663331"/>
    <lineage>
        <taxon>Eukaryota</taxon>
        <taxon>Fungi</taxon>
        <taxon>Dikarya</taxon>
        <taxon>Ascomycota</taxon>
        <taxon>Pezizomycotina</taxon>
        <taxon>Eurotiomycetes</taxon>
        <taxon>Eurotiomycetidae</taxon>
        <taxon>Onygenales</taxon>
        <taxon>Arthrodermataceae</taxon>
        <taxon>Trichophyton</taxon>
    </lineage>
</organism>
<proteinExistence type="evidence at protein level"/>
<comment type="function">
    <text evidence="1">Probable secreted aspartic protease that supplies the fungus with nutrient amino acids (By similarity). May be able to degrade the selected host's proteins involved in the immune defense (By similarity).</text>
</comment>
<comment type="subcellular location">
    <subcellularLocation>
        <location evidence="5">Secreted</location>
    </subcellularLocation>
</comment>
<comment type="similarity">
    <text evidence="6">Belongs to the peptidase A1 family.</text>
</comment>
<gene>
    <name type="ORF">ARB_07536</name>
</gene>
<protein>
    <recommendedName>
        <fullName evidence="6">Probable secreted aspartic protease ARB_07536</fullName>
        <ecNumber evidence="6">3.4.23.-</ecNumber>
    </recommendedName>
</protein>
<feature type="signal peptide" evidence="2">
    <location>
        <begin position="1"/>
        <end position="20"/>
    </location>
</feature>
<feature type="chain" id="PRO_5003053641" description="Probable secreted aspartic protease ARB_07536">
    <location>
        <begin position="21"/>
        <end position="417"/>
    </location>
</feature>
<feature type="domain" description="Peptidase A1" evidence="4">
    <location>
        <begin position="42"/>
        <end position="413"/>
    </location>
</feature>
<feature type="glycosylation site" description="N-linked (GlcNAc...) asparagine" evidence="3">
    <location>
        <position position="74"/>
    </location>
</feature>
<feature type="glycosylation site" description="N-linked (GlcNAc...) asparagine" evidence="3">
    <location>
        <position position="91"/>
    </location>
</feature>
<feature type="glycosylation site" description="N-linked (GlcNAc...) asparagine" evidence="3">
    <location>
        <position position="100"/>
    </location>
</feature>
<feature type="glycosylation site" description="N-linked (GlcNAc...) asparagine" evidence="3">
    <location>
        <position position="170"/>
    </location>
</feature>
<feature type="glycosylation site" description="N-linked (GlcNAc...) asparagine" evidence="3">
    <location>
        <position position="276"/>
    </location>
</feature>
<feature type="glycosylation site" description="N-linked (GlcNAc...) asparagine" evidence="3">
    <location>
        <position position="314"/>
    </location>
</feature>
<feature type="disulfide bond" evidence="4">
    <location>
        <begin position="333"/>
        <end position="373"/>
    </location>
</feature>
<accession>D4ATH2</accession>
<keyword id="KW-0064">Aspartyl protease</keyword>
<keyword id="KW-1015">Disulfide bond</keyword>
<keyword id="KW-0325">Glycoprotein</keyword>
<keyword id="KW-0378">Hydrolase</keyword>
<keyword id="KW-0645">Protease</keyword>
<keyword id="KW-1185">Reference proteome</keyword>
<keyword id="KW-0964">Secreted</keyword>
<keyword id="KW-0732">Signal</keyword>
<evidence type="ECO:0000250" key="1">
    <source>
        <dbReference type="UniProtKB" id="P0CY27"/>
    </source>
</evidence>
<evidence type="ECO:0000255" key="2"/>
<evidence type="ECO:0000255" key="3">
    <source>
        <dbReference type="PROSITE-ProRule" id="PRU00498"/>
    </source>
</evidence>
<evidence type="ECO:0000255" key="4">
    <source>
        <dbReference type="PROSITE-ProRule" id="PRU01103"/>
    </source>
</evidence>
<evidence type="ECO:0000269" key="5">
    <source>
    </source>
</evidence>
<evidence type="ECO:0000305" key="6"/>
<dbReference type="EC" id="3.4.23.-" evidence="6"/>
<dbReference type="EMBL" id="ABSU01000009">
    <property type="protein sequence ID" value="EFE33591.1"/>
    <property type="molecule type" value="Genomic_DNA"/>
</dbReference>
<dbReference type="RefSeq" id="XP_003014231.1">
    <property type="nucleotide sequence ID" value="XM_003014185.1"/>
</dbReference>
<dbReference type="SMR" id="D4ATH2"/>
<dbReference type="STRING" id="663331.D4ATH2"/>
<dbReference type="GeneID" id="9521649"/>
<dbReference type="KEGG" id="abe:ARB_07536"/>
<dbReference type="eggNOG" id="ENOG502SMFH">
    <property type="taxonomic scope" value="Eukaryota"/>
</dbReference>
<dbReference type="HOGENOM" id="CLU_039077_0_0_1"/>
<dbReference type="OMA" id="FVDWTWI"/>
<dbReference type="OrthoDB" id="771136at2759"/>
<dbReference type="Proteomes" id="UP000008866">
    <property type="component" value="Unassembled WGS sequence"/>
</dbReference>
<dbReference type="GO" id="GO:0005576">
    <property type="term" value="C:extracellular region"/>
    <property type="evidence" value="ECO:0007669"/>
    <property type="project" value="UniProtKB-SubCell"/>
</dbReference>
<dbReference type="GO" id="GO:0004190">
    <property type="term" value="F:aspartic-type endopeptidase activity"/>
    <property type="evidence" value="ECO:0007669"/>
    <property type="project" value="UniProtKB-KW"/>
</dbReference>
<dbReference type="GO" id="GO:0006508">
    <property type="term" value="P:proteolysis"/>
    <property type="evidence" value="ECO:0007669"/>
    <property type="project" value="UniProtKB-KW"/>
</dbReference>
<dbReference type="Gene3D" id="2.40.70.10">
    <property type="entry name" value="Acid Proteases"/>
    <property type="match status" value="2"/>
</dbReference>
<dbReference type="InterPro" id="IPR001461">
    <property type="entry name" value="Aspartic_peptidase_A1"/>
</dbReference>
<dbReference type="InterPro" id="IPR033121">
    <property type="entry name" value="PEPTIDASE_A1"/>
</dbReference>
<dbReference type="InterPro" id="IPR021109">
    <property type="entry name" value="Peptidase_aspartic_dom_sf"/>
</dbReference>
<dbReference type="PANTHER" id="PTHR47966">
    <property type="entry name" value="BETA-SITE APP-CLEAVING ENZYME, ISOFORM A-RELATED"/>
    <property type="match status" value="1"/>
</dbReference>
<dbReference type="PANTHER" id="PTHR47966:SF51">
    <property type="entry name" value="BETA-SITE APP-CLEAVING ENZYME, ISOFORM A-RELATED"/>
    <property type="match status" value="1"/>
</dbReference>
<dbReference type="Pfam" id="PF00026">
    <property type="entry name" value="Asp"/>
    <property type="match status" value="1"/>
</dbReference>
<dbReference type="SUPFAM" id="SSF50630">
    <property type="entry name" value="Acid proteases"/>
    <property type="match status" value="1"/>
</dbReference>
<dbReference type="PROSITE" id="PS51767">
    <property type="entry name" value="PEPTIDASE_A1"/>
    <property type="match status" value="1"/>
</dbReference>
<name>CARP1_ARTBC</name>
<sequence length="417" mass="47034">MRGILILVALGAATIPQASAAPNDRQQSMIDLPLKLYQNGFNTDLVTIGTPAQATRLFVDWTWIGAYTVSTKCNHTNNAYGCLAPGQKLFNETQSTSLVNQTNLYPTRTWNPNHFFMDKDLTAVFASDIYRVGDRESRLTLQLSQLNWKASFPYPFSGIFGMSPVFKSDNMSIQAPFHQMVQQKKFHSGLTSFIYCYSDEPGYKSPSKERCNGNDGIQTLGGYHHRDIGWRGIEWINTIVFPIVNDIDFIYNPAFYNYWSIPVTKHFIGNEEQALNTTTGSAVVFDHASYGRGAAMSVASYRRLVSITNAQPVNLTMATLPNNGKQKFYSVDCDRVDSFPAVKYQFGKWRRVWSIEARHYISKAKTMDGKDVCVLNVRVIGQGENFVIGNLGENFAKDKVILFDFEKNRVGLADFRD</sequence>
<reference key="1">
    <citation type="journal article" date="2011" name="Genome Biol.">
        <title>Comparative and functional genomics provide insights into the pathogenicity of dermatophytic fungi.</title>
        <authorList>
            <person name="Burmester A."/>
            <person name="Shelest E."/>
            <person name="Gloeckner G."/>
            <person name="Heddergott C."/>
            <person name="Schindler S."/>
            <person name="Staib P."/>
            <person name="Heidel A."/>
            <person name="Felder M."/>
            <person name="Petzold A."/>
            <person name="Szafranski K."/>
            <person name="Feuermann M."/>
            <person name="Pedruzzi I."/>
            <person name="Priebe S."/>
            <person name="Groth M."/>
            <person name="Winkler R."/>
            <person name="Li W."/>
            <person name="Kniemeyer O."/>
            <person name="Schroeckh V."/>
            <person name="Hertweck C."/>
            <person name="Hube B."/>
            <person name="White T.C."/>
            <person name="Platzer M."/>
            <person name="Guthke R."/>
            <person name="Heitman J."/>
            <person name="Woestemeyer J."/>
            <person name="Zipfel P.F."/>
            <person name="Monod M."/>
            <person name="Brakhage A.A."/>
        </authorList>
    </citation>
    <scope>NUCLEOTIDE SEQUENCE [LARGE SCALE GENOMIC DNA]</scope>
    <source>
        <strain>ATCC MYA-4681 / CBS 112371</strain>
    </source>
</reference>
<reference key="2">
    <citation type="journal article" date="2011" name="Proteomics">
        <title>Identification of novel secreted proteases during extracellular proteolysis by dermatophytes at acidic pH.</title>
        <authorList>
            <person name="Sriranganadane D."/>
            <person name="Waridel P."/>
            <person name="Salamin K."/>
            <person name="Feuermann M."/>
            <person name="Mignon B."/>
            <person name="Staib P."/>
            <person name="Neuhaus J.M."/>
            <person name="Quadroni M."/>
            <person name="Monod M."/>
        </authorList>
    </citation>
    <scope>IDENTIFICATION BY MASS SPECTROMETRY</scope>
    <scope>SUBCELLULAR LOCATION</scope>
</reference>